<comment type="function">
    <text evidence="1">Catalyzes the attachment of threonine to tRNA(Thr) in a two-step reaction: L-threonine is first activated by ATP to form Thr-AMP and then transferred to the acceptor end of tRNA(Thr). Also edits incorrectly charged L-seryl-tRNA(Thr).</text>
</comment>
<comment type="catalytic activity">
    <reaction evidence="1">
        <text>tRNA(Thr) + L-threonine + ATP = L-threonyl-tRNA(Thr) + AMP + diphosphate + H(+)</text>
        <dbReference type="Rhea" id="RHEA:24624"/>
        <dbReference type="Rhea" id="RHEA-COMP:9670"/>
        <dbReference type="Rhea" id="RHEA-COMP:9704"/>
        <dbReference type="ChEBI" id="CHEBI:15378"/>
        <dbReference type="ChEBI" id="CHEBI:30616"/>
        <dbReference type="ChEBI" id="CHEBI:33019"/>
        <dbReference type="ChEBI" id="CHEBI:57926"/>
        <dbReference type="ChEBI" id="CHEBI:78442"/>
        <dbReference type="ChEBI" id="CHEBI:78534"/>
        <dbReference type="ChEBI" id="CHEBI:456215"/>
        <dbReference type="EC" id="6.1.1.3"/>
    </reaction>
</comment>
<comment type="cofactor">
    <cofactor evidence="1">
        <name>Zn(2+)</name>
        <dbReference type="ChEBI" id="CHEBI:29105"/>
    </cofactor>
    <text evidence="1">Binds 1 zinc ion per subunit.</text>
</comment>
<comment type="subunit">
    <text evidence="1">Homodimer.</text>
</comment>
<comment type="subcellular location">
    <subcellularLocation>
        <location evidence="1">Cytoplasm</location>
    </subcellularLocation>
</comment>
<comment type="similarity">
    <text evidence="1">Belongs to the class-II aminoacyl-tRNA synthetase family.</text>
</comment>
<name>SYT_HAEIN</name>
<gene>
    <name evidence="1" type="primary">thrS</name>
    <name type="ordered locus">HI_1367</name>
</gene>
<reference key="1">
    <citation type="journal article" date="1995" name="Science">
        <title>Whole-genome random sequencing and assembly of Haemophilus influenzae Rd.</title>
        <authorList>
            <person name="Fleischmann R.D."/>
            <person name="Adams M.D."/>
            <person name="White O."/>
            <person name="Clayton R.A."/>
            <person name="Kirkness E.F."/>
            <person name="Kerlavage A.R."/>
            <person name="Bult C.J."/>
            <person name="Tomb J.-F."/>
            <person name="Dougherty B.A."/>
            <person name="Merrick J.M."/>
            <person name="McKenney K."/>
            <person name="Sutton G.G."/>
            <person name="FitzHugh W."/>
            <person name="Fields C.A."/>
            <person name="Gocayne J.D."/>
            <person name="Scott J.D."/>
            <person name="Shirley R."/>
            <person name="Liu L.-I."/>
            <person name="Glodek A."/>
            <person name="Kelley J.M."/>
            <person name="Weidman J.F."/>
            <person name="Phillips C.A."/>
            <person name="Spriggs T."/>
            <person name="Hedblom E."/>
            <person name="Cotton M.D."/>
            <person name="Utterback T.R."/>
            <person name="Hanna M.C."/>
            <person name="Nguyen D.T."/>
            <person name="Saudek D.M."/>
            <person name="Brandon R.C."/>
            <person name="Fine L.D."/>
            <person name="Fritchman J.L."/>
            <person name="Fuhrmann J.L."/>
            <person name="Geoghagen N.S.M."/>
            <person name="Gnehm C.L."/>
            <person name="McDonald L.A."/>
            <person name="Small K.V."/>
            <person name="Fraser C.M."/>
            <person name="Smith H.O."/>
            <person name="Venter J.C."/>
        </authorList>
    </citation>
    <scope>NUCLEOTIDE SEQUENCE [LARGE SCALE GENOMIC DNA]</scope>
    <source>
        <strain>ATCC 51907 / DSM 11121 / KW20 / Rd</strain>
    </source>
</reference>
<reference key="2">
    <citation type="journal article" date="1996" name="Gene">
        <title>Characterization of the Haemophilus influenzae topA locus: DNA topoisomerase I is required for genetic competence.</title>
        <authorList>
            <person name="Chandler M.S."/>
            <person name="Smith R.A."/>
        </authorList>
    </citation>
    <scope>NUCLEOTIDE SEQUENCE [GENOMIC DNA] OF 1-443</scope>
    <source>
        <strain>ATCC 51907 / DSM 11121 / KW20 / Rd</strain>
    </source>
</reference>
<proteinExistence type="inferred from homology"/>
<organism>
    <name type="scientific">Haemophilus influenzae (strain ATCC 51907 / DSM 11121 / KW20 / Rd)</name>
    <dbReference type="NCBI Taxonomy" id="71421"/>
    <lineage>
        <taxon>Bacteria</taxon>
        <taxon>Pseudomonadati</taxon>
        <taxon>Pseudomonadota</taxon>
        <taxon>Gammaproteobacteria</taxon>
        <taxon>Pasteurellales</taxon>
        <taxon>Pasteurellaceae</taxon>
        <taxon>Haemophilus</taxon>
    </lineage>
</organism>
<keyword id="KW-0030">Aminoacyl-tRNA synthetase</keyword>
<keyword id="KW-0067">ATP-binding</keyword>
<keyword id="KW-0963">Cytoplasm</keyword>
<keyword id="KW-0436">Ligase</keyword>
<keyword id="KW-0479">Metal-binding</keyword>
<keyword id="KW-0547">Nucleotide-binding</keyword>
<keyword id="KW-0648">Protein biosynthesis</keyword>
<keyword id="KW-1185">Reference proteome</keyword>
<keyword id="KW-0694">RNA-binding</keyword>
<keyword id="KW-0820">tRNA-binding</keyword>
<keyword id="KW-0862">Zinc</keyword>
<accession>P43014</accession>
<dbReference type="EC" id="6.1.1.3" evidence="1"/>
<dbReference type="EMBL" id="L42023">
    <property type="protein sequence ID" value="AAC23014.1"/>
    <property type="molecule type" value="Genomic_DNA"/>
</dbReference>
<dbReference type="EMBL" id="U20964">
    <property type="protein sequence ID" value="AAC43729.1"/>
    <property type="molecule type" value="Genomic_DNA"/>
</dbReference>
<dbReference type="PIR" id="H64119">
    <property type="entry name" value="H64119"/>
</dbReference>
<dbReference type="RefSeq" id="NP_439518.1">
    <property type="nucleotide sequence ID" value="NC_000907.1"/>
</dbReference>
<dbReference type="SMR" id="P43014"/>
<dbReference type="STRING" id="71421.HI_1367"/>
<dbReference type="EnsemblBacteria" id="AAC23014">
    <property type="protein sequence ID" value="AAC23014"/>
    <property type="gene ID" value="HI_1367"/>
</dbReference>
<dbReference type="KEGG" id="hin:HI_1367"/>
<dbReference type="PATRIC" id="fig|71421.8.peg.1421"/>
<dbReference type="eggNOG" id="COG0441">
    <property type="taxonomic scope" value="Bacteria"/>
</dbReference>
<dbReference type="HOGENOM" id="CLU_008554_0_1_6"/>
<dbReference type="OrthoDB" id="9802304at2"/>
<dbReference type="PhylomeDB" id="P43014"/>
<dbReference type="BioCyc" id="HINF71421:G1GJ1-1392-MONOMER"/>
<dbReference type="Proteomes" id="UP000000579">
    <property type="component" value="Chromosome"/>
</dbReference>
<dbReference type="GO" id="GO:0005829">
    <property type="term" value="C:cytosol"/>
    <property type="evidence" value="ECO:0000318"/>
    <property type="project" value="GO_Central"/>
</dbReference>
<dbReference type="GO" id="GO:0005524">
    <property type="term" value="F:ATP binding"/>
    <property type="evidence" value="ECO:0007669"/>
    <property type="project" value="UniProtKB-UniRule"/>
</dbReference>
<dbReference type="GO" id="GO:0046872">
    <property type="term" value="F:metal ion binding"/>
    <property type="evidence" value="ECO:0007669"/>
    <property type="project" value="UniProtKB-KW"/>
</dbReference>
<dbReference type="GO" id="GO:0004829">
    <property type="term" value="F:threonine-tRNA ligase activity"/>
    <property type="evidence" value="ECO:0000318"/>
    <property type="project" value="GO_Central"/>
</dbReference>
<dbReference type="GO" id="GO:0000049">
    <property type="term" value="F:tRNA binding"/>
    <property type="evidence" value="ECO:0007669"/>
    <property type="project" value="UniProtKB-KW"/>
</dbReference>
<dbReference type="GO" id="GO:0006435">
    <property type="term" value="P:threonyl-tRNA aminoacylation"/>
    <property type="evidence" value="ECO:0000318"/>
    <property type="project" value="GO_Central"/>
</dbReference>
<dbReference type="CDD" id="cd01667">
    <property type="entry name" value="TGS_ThrRS"/>
    <property type="match status" value="1"/>
</dbReference>
<dbReference type="CDD" id="cd00860">
    <property type="entry name" value="ThrRS_anticodon"/>
    <property type="match status" value="1"/>
</dbReference>
<dbReference type="CDD" id="cd00771">
    <property type="entry name" value="ThrRS_core"/>
    <property type="match status" value="1"/>
</dbReference>
<dbReference type="FunFam" id="3.10.20.30:FF:000005">
    <property type="entry name" value="Threonine--tRNA ligase"/>
    <property type="match status" value="1"/>
</dbReference>
<dbReference type="FunFam" id="3.30.54.20:FF:000002">
    <property type="entry name" value="Threonine--tRNA ligase"/>
    <property type="match status" value="1"/>
</dbReference>
<dbReference type="FunFam" id="3.30.930.10:FF:000002">
    <property type="entry name" value="Threonine--tRNA ligase"/>
    <property type="match status" value="1"/>
</dbReference>
<dbReference type="FunFam" id="3.40.50.800:FF:000001">
    <property type="entry name" value="Threonine--tRNA ligase"/>
    <property type="match status" value="1"/>
</dbReference>
<dbReference type="FunFam" id="3.30.980.10:FF:000005">
    <property type="entry name" value="Threonyl-tRNA synthetase, mitochondrial"/>
    <property type="match status" value="1"/>
</dbReference>
<dbReference type="Gene3D" id="3.10.20.30">
    <property type="match status" value="1"/>
</dbReference>
<dbReference type="Gene3D" id="3.30.54.20">
    <property type="match status" value="1"/>
</dbReference>
<dbReference type="Gene3D" id="3.40.50.800">
    <property type="entry name" value="Anticodon-binding domain"/>
    <property type="match status" value="1"/>
</dbReference>
<dbReference type="Gene3D" id="3.30.930.10">
    <property type="entry name" value="Bira Bifunctional Protein, Domain 2"/>
    <property type="match status" value="1"/>
</dbReference>
<dbReference type="Gene3D" id="3.30.980.10">
    <property type="entry name" value="Threonyl-trna Synthetase, Chain A, domain 2"/>
    <property type="match status" value="1"/>
</dbReference>
<dbReference type="HAMAP" id="MF_00184">
    <property type="entry name" value="Thr_tRNA_synth"/>
    <property type="match status" value="1"/>
</dbReference>
<dbReference type="InterPro" id="IPR002314">
    <property type="entry name" value="aa-tRNA-synt_IIb"/>
</dbReference>
<dbReference type="InterPro" id="IPR006195">
    <property type="entry name" value="aa-tRNA-synth_II"/>
</dbReference>
<dbReference type="InterPro" id="IPR045864">
    <property type="entry name" value="aa-tRNA-synth_II/BPL/LPL"/>
</dbReference>
<dbReference type="InterPro" id="IPR004154">
    <property type="entry name" value="Anticodon-bd"/>
</dbReference>
<dbReference type="InterPro" id="IPR036621">
    <property type="entry name" value="Anticodon-bd_dom_sf"/>
</dbReference>
<dbReference type="InterPro" id="IPR012675">
    <property type="entry name" value="Beta-grasp_dom_sf"/>
</dbReference>
<dbReference type="InterPro" id="IPR004095">
    <property type="entry name" value="TGS"/>
</dbReference>
<dbReference type="InterPro" id="IPR012676">
    <property type="entry name" value="TGS-like"/>
</dbReference>
<dbReference type="InterPro" id="IPR002320">
    <property type="entry name" value="Thr-tRNA-ligase_IIa"/>
</dbReference>
<dbReference type="InterPro" id="IPR018163">
    <property type="entry name" value="Thr/Ala-tRNA-synth_IIc_edit"/>
</dbReference>
<dbReference type="InterPro" id="IPR047246">
    <property type="entry name" value="ThrRS_anticodon"/>
</dbReference>
<dbReference type="InterPro" id="IPR033728">
    <property type="entry name" value="ThrRS_core"/>
</dbReference>
<dbReference type="InterPro" id="IPR012947">
    <property type="entry name" value="tRNA_SAD"/>
</dbReference>
<dbReference type="NCBIfam" id="TIGR00418">
    <property type="entry name" value="thrS"/>
    <property type="match status" value="1"/>
</dbReference>
<dbReference type="PANTHER" id="PTHR11451:SF44">
    <property type="entry name" value="THREONINE--TRNA LIGASE, CHLOROPLASTIC_MITOCHONDRIAL 2"/>
    <property type="match status" value="1"/>
</dbReference>
<dbReference type="PANTHER" id="PTHR11451">
    <property type="entry name" value="THREONINE-TRNA LIGASE"/>
    <property type="match status" value="1"/>
</dbReference>
<dbReference type="Pfam" id="PF03129">
    <property type="entry name" value="HGTP_anticodon"/>
    <property type="match status" value="1"/>
</dbReference>
<dbReference type="Pfam" id="PF02824">
    <property type="entry name" value="TGS"/>
    <property type="match status" value="1"/>
</dbReference>
<dbReference type="Pfam" id="PF00587">
    <property type="entry name" value="tRNA-synt_2b"/>
    <property type="match status" value="1"/>
</dbReference>
<dbReference type="Pfam" id="PF07973">
    <property type="entry name" value="tRNA_SAD"/>
    <property type="match status" value="1"/>
</dbReference>
<dbReference type="PRINTS" id="PR01047">
    <property type="entry name" value="TRNASYNTHTHR"/>
</dbReference>
<dbReference type="SMART" id="SM00863">
    <property type="entry name" value="tRNA_SAD"/>
    <property type="match status" value="1"/>
</dbReference>
<dbReference type="SUPFAM" id="SSF52954">
    <property type="entry name" value="Class II aaRS ABD-related"/>
    <property type="match status" value="1"/>
</dbReference>
<dbReference type="SUPFAM" id="SSF55681">
    <property type="entry name" value="Class II aaRS and biotin synthetases"/>
    <property type="match status" value="1"/>
</dbReference>
<dbReference type="SUPFAM" id="SSF81271">
    <property type="entry name" value="TGS-like"/>
    <property type="match status" value="1"/>
</dbReference>
<dbReference type="SUPFAM" id="SSF55186">
    <property type="entry name" value="ThrRS/AlaRS common domain"/>
    <property type="match status" value="1"/>
</dbReference>
<dbReference type="PROSITE" id="PS50862">
    <property type="entry name" value="AA_TRNA_LIGASE_II"/>
    <property type="match status" value="1"/>
</dbReference>
<dbReference type="PROSITE" id="PS51880">
    <property type="entry name" value="TGS"/>
    <property type="match status" value="1"/>
</dbReference>
<protein>
    <recommendedName>
        <fullName evidence="1">Threonine--tRNA ligase</fullName>
        <ecNumber evidence="1">6.1.1.3</ecNumber>
    </recommendedName>
    <alternativeName>
        <fullName evidence="1">Threonyl-tRNA synthetase</fullName>
        <shortName evidence="1">ThrRS</shortName>
    </alternativeName>
</protein>
<evidence type="ECO:0000255" key="1">
    <source>
        <dbReference type="HAMAP-Rule" id="MF_00184"/>
    </source>
</evidence>
<evidence type="ECO:0000255" key="2">
    <source>
        <dbReference type="PROSITE-ProRule" id="PRU01228"/>
    </source>
</evidence>
<sequence length="643" mass="73712">MPIITLPDGSQRQFDRPVSVLEVAQDIGAGLAKATIAGRVNGERRDACYVIEQDATLEIITAKDEDGLEIIRHSCAHLLGHAIKQLFPDVKMAIGPTIENGFYYDVDLDRSLTQEDIDAIEKRMLELAKTNYDVVKKRVTWQEARDTFEKRGEPYKMAILDENIERTATPALYHHLEYIDMCRGPHVPNMRFCQHFKLQKVAGAYWRGDSKNKMLQRIYGTAWADKKQLAEYLTRLEEAAKRDHRKIGKALDLYHMQEEAPGMVFWHNDGWTIFRELETFVRTKLKQYDYQEVKGPFMMDRVLWEKTGHWQNYADLMFTTQSENREYAIKPMNCPGHVQIFNQGLKSYRDLPIRMAEFGSCHRNEPSGSLHGLMRVRGFTQDDAHIFCTEDQIESEVTSCIKMVYDIYSTFGFTNIAVKLSTRPENRIGSDEMWDRAEAGLAAALAHNGLEYEIQEGEGAFYGPKIEFALRDCLGREWQCGTVQLDFALPGRLDATYVAEDNSRKTPVMIHRAILGSIERFIGIITEEYAGFFPAWLAPTQAVVMNITDSQADYVQKVAKQLSDVGLRVKTDLRNEKVGFKIREHTLRRVPYMLVCGDKEIAEGKVAVRTRKGADLGTFTVEEFAEILKNQVRSRELKLLNEE</sequence>
<feature type="chain" id="PRO_0000100987" description="Threonine--tRNA ligase">
    <location>
        <begin position="1"/>
        <end position="643"/>
    </location>
</feature>
<feature type="domain" description="TGS" evidence="2">
    <location>
        <begin position="1"/>
        <end position="61"/>
    </location>
</feature>
<feature type="region of interest" description="Catalytic" evidence="1">
    <location>
        <begin position="243"/>
        <end position="534"/>
    </location>
</feature>
<feature type="binding site" evidence="1">
    <location>
        <position position="334"/>
    </location>
    <ligand>
        <name>Zn(2+)</name>
        <dbReference type="ChEBI" id="CHEBI:29105"/>
    </ligand>
</feature>
<feature type="binding site" evidence="1">
    <location>
        <position position="385"/>
    </location>
    <ligand>
        <name>Zn(2+)</name>
        <dbReference type="ChEBI" id="CHEBI:29105"/>
    </ligand>
</feature>
<feature type="binding site" evidence="1">
    <location>
        <position position="511"/>
    </location>
    <ligand>
        <name>Zn(2+)</name>
        <dbReference type="ChEBI" id="CHEBI:29105"/>
    </ligand>
</feature>